<reference key="1">
    <citation type="journal article" date="2002" name="Proc. Natl. Acad. Sci. U.S.A.">
        <title>Genome sequence of Streptococcus mutans UA159, a cariogenic dental pathogen.</title>
        <authorList>
            <person name="Ajdic D.J."/>
            <person name="McShan W.M."/>
            <person name="McLaughlin R.E."/>
            <person name="Savic G."/>
            <person name="Chang J."/>
            <person name="Carson M.B."/>
            <person name="Primeaux C."/>
            <person name="Tian R."/>
            <person name="Kenton S."/>
            <person name="Jia H.G."/>
            <person name="Lin S.P."/>
            <person name="Qian Y."/>
            <person name="Li S."/>
            <person name="Zhu H."/>
            <person name="Najar F.Z."/>
            <person name="Lai H."/>
            <person name="White J."/>
            <person name="Roe B.A."/>
            <person name="Ferretti J.J."/>
        </authorList>
    </citation>
    <scope>NUCLEOTIDE SEQUENCE [LARGE SCALE GENOMIC DNA]</scope>
    <source>
        <strain>ATCC 700610 / UA159</strain>
    </source>
</reference>
<name>ILVC_STRMU</name>
<dbReference type="EC" id="1.1.1.86" evidence="1"/>
<dbReference type="EMBL" id="AE014133">
    <property type="protein sequence ID" value="AAN58004.1"/>
    <property type="molecule type" value="Genomic_DNA"/>
</dbReference>
<dbReference type="RefSeq" id="NP_720698.1">
    <property type="nucleotide sequence ID" value="NC_004350.2"/>
</dbReference>
<dbReference type="RefSeq" id="WP_002262760.1">
    <property type="nucleotide sequence ID" value="NC_004350.2"/>
</dbReference>
<dbReference type="SMR" id="Q8DW43"/>
<dbReference type="STRING" id="210007.SMU_233"/>
<dbReference type="GeneID" id="93860176"/>
<dbReference type="KEGG" id="smu:SMU_233"/>
<dbReference type="PATRIC" id="fig|210007.7.peg.201"/>
<dbReference type="eggNOG" id="COG0059">
    <property type="taxonomic scope" value="Bacteria"/>
</dbReference>
<dbReference type="HOGENOM" id="CLU_033821_0_1_9"/>
<dbReference type="OrthoDB" id="9804088at2"/>
<dbReference type="PhylomeDB" id="Q8DW43"/>
<dbReference type="UniPathway" id="UPA00047">
    <property type="reaction ID" value="UER00056"/>
</dbReference>
<dbReference type="UniPathway" id="UPA00049">
    <property type="reaction ID" value="UER00060"/>
</dbReference>
<dbReference type="Proteomes" id="UP000002512">
    <property type="component" value="Chromosome"/>
</dbReference>
<dbReference type="GO" id="GO:0005829">
    <property type="term" value="C:cytosol"/>
    <property type="evidence" value="ECO:0007669"/>
    <property type="project" value="TreeGrafter"/>
</dbReference>
<dbReference type="GO" id="GO:0004455">
    <property type="term" value="F:ketol-acid reductoisomerase activity"/>
    <property type="evidence" value="ECO:0007669"/>
    <property type="project" value="UniProtKB-UniRule"/>
</dbReference>
<dbReference type="GO" id="GO:0000287">
    <property type="term" value="F:magnesium ion binding"/>
    <property type="evidence" value="ECO:0007669"/>
    <property type="project" value="UniProtKB-UniRule"/>
</dbReference>
<dbReference type="GO" id="GO:0050661">
    <property type="term" value="F:NADP binding"/>
    <property type="evidence" value="ECO:0007669"/>
    <property type="project" value="InterPro"/>
</dbReference>
<dbReference type="GO" id="GO:0009097">
    <property type="term" value="P:isoleucine biosynthetic process"/>
    <property type="evidence" value="ECO:0007669"/>
    <property type="project" value="UniProtKB-UniRule"/>
</dbReference>
<dbReference type="GO" id="GO:0009099">
    <property type="term" value="P:L-valine biosynthetic process"/>
    <property type="evidence" value="ECO:0007669"/>
    <property type="project" value="UniProtKB-UniRule"/>
</dbReference>
<dbReference type="FunFam" id="3.40.50.720:FF:000023">
    <property type="entry name" value="Ketol-acid reductoisomerase (NADP(+))"/>
    <property type="match status" value="1"/>
</dbReference>
<dbReference type="Gene3D" id="6.10.240.10">
    <property type="match status" value="1"/>
</dbReference>
<dbReference type="Gene3D" id="3.40.50.720">
    <property type="entry name" value="NAD(P)-binding Rossmann-like Domain"/>
    <property type="match status" value="1"/>
</dbReference>
<dbReference type="HAMAP" id="MF_00435">
    <property type="entry name" value="IlvC"/>
    <property type="match status" value="1"/>
</dbReference>
<dbReference type="InterPro" id="IPR008927">
    <property type="entry name" value="6-PGluconate_DH-like_C_sf"/>
</dbReference>
<dbReference type="InterPro" id="IPR013023">
    <property type="entry name" value="KARI"/>
</dbReference>
<dbReference type="InterPro" id="IPR000506">
    <property type="entry name" value="KARI_C"/>
</dbReference>
<dbReference type="InterPro" id="IPR013116">
    <property type="entry name" value="KARI_N"/>
</dbReference>
<dbReference type="InterPro" id="IPR014359">
    <property type="entry name" value="KARI_prok"/>
</dbReference>
<dbReference type="InterPro" id="IPR036291">
    <property type="entry name" value="NAD(P)-bd_dom_sf"/>
</dbReference>
<dbReference type="NCBIfam" id="TIGR00465">
    <property type="entry name" value="ilvC"/>
    <property type="match status" value="1"/>
</dbReference>
<dbReference type="NCBIfam" id="NF004017">
    <property type="entry name" value="PRK05479.1"/>
    <property type="match status" value="1"/>
</dbReference>
<dbReference type="NCBIfam" id="NF009940">
    <property type="entry name" value="PRK13403.1"/>
    <property type="match status" value="1"/>
</dbReference>
<dbReference type="PANTHER" id="PTHR21371">
    <property type="entry name" value="KETOL-ACID REDUCTOISOMERASE, MITOCHONDRIAL"/>
    <property type="match status" value="1"/>
</dbReference>
<dbReference type="PANTHER" id="PTHR21371:SF1">
    <property type="entry name" value="KETOL-ACID REDUCTOISOMERASE, MITOCHONDRIAL"/>
    <property type="match status" value="1"/>
</dbReference>
<dbReference type="Pfam" id="PF01450">
    <property type="entry name" value="KARI_C"/>
    <property type="match status" value="1"/>
</dbReference>
<dbReference type="Pfam" id="PF07991">
    <property type="entry name" value="KARI_N"/>
    <property type="match status" value="1"/>
</dbReference>
<dbReference type="PIRSF" id="PIRSF000116">
    <property type="entry name" value="IlvC_gammaproteo"/>
    <property type="match status" value="1"/>
</dbReference>
<dbReference type="SUPFAM" id="SSF48179">
    <property type="entry name" value="6-phosphogluconate dehydrogenase C-terminal domain-like"/>
    <property type="match status" value="1"/>
</dbReference>
<dbReference type="SUPFAM" id="SSF51735">
    <property type="entry name" value="NAD(P)-binding Rossmann-fold domains"/>
    <property type="match status" value="1"/>
</dbReference>
<dbReference type="PROSITE" id="PS51851">
    <property type="entry name" value="KARI_C"/>
    <property type="match status" value="1"/>
</dbReference>
<dbReference type="PROSITE" id="PS51850">
    <property type="entry name" value="KARI_N"/>
    <property type="match status" value="1"/>
</dbReference>
<comment type="function">
    <text evidence="1">Involved in the biosynthesis of branched-chain amino acids (BCAA). Catalyzes an alkyl-migration followed by a ketol-acid reduction of (S)-2-acetolactate (S2AL) to yield (R)-2,3-dihydroxy-isovalerate. In the isomerase reaction, S2AL is rearranged via a Mg-dependent methyl migration to produce 3-hydroxy-3-methyl-2-ketobutyrate (HMKB). In the reductase reaction, this 2-ketoacid undergoes a metal-dependent reduction by NADPH to yield (R)-2,3-dihydroxy-isovalerate.</text>
</comment>
<comment type="catalytic activity">
    <reaction evidence="1">
        <text>(2R)-2,3-dihydroxy-3-methylbutanoate + NADP(+) = (2S)-2-acetolactate + NADPH + H(+)</text>
        <dbReference type="Rhea" id="RHEA:22068"/>
        <dbReference type="ChEBI" id="CHEBI:15378"/>
        <dbReference type="ChEBI" id="CHEBI:49072"/>
        <dbReference type="ChEBI" id="CHEBI:57783"/>
        <dbReference type="ChEBI" id="CHEBI:58349"/>
        <dbReference type="ChEBI" id="CHEBI:58476"/>
        <dbReference type="EC" id="1.1.1.86"/>
    </reaction>
</comment>
<comment type="catalytic activity">
    <reaction evidence="1">
        <text>(2R,3R)-2,3-dihydroxy-3-methylpentanoate + NADP(+) = (S)-2-ethyl-2-hydroxy-3-oxobutanoate + NADPH + H(+)</text>
        <dbReference type="Rhea" id="RHEA:13493"/>
        <dbReference type="ChEBI" id="CHEBI:15378"/>
        <dbReference type="ChEBI" id="CHEBI:49256"/>
        <dbReference type="ChEBI" id="CHEBI:49258"/>
        <dbReference type="ChEBI" id="CHEBI:57783"/>
        <dbReference type="ChEBI" id="CHEBI:58349"/>
        <dbReference type="EC" id="1.1.1.86"/>
    </reaction>
</comment>
<comment type="cofactor">
    <cofactor evidence="1">
        <name>Mg(2+)</name>
        <dbReference type="ChEBI" id="CHEBI:18420"/>
    </cofactor>
    <text evidence="1">Binds 2 magnesium ions per subunit.</text>
</comment>
<comment type="pathway">
    <text evidence="1">Amino-acid biosynthesis; L-isoleucine biosynthesis; L-isoleucine from 2-oxobutanoate: step 2/4.</text>
</comment>
<comment type="pathway">
    <text evidence="1">Amino-acid biosynthesis; L-valine biosynthesis; L-valine from pyruvate: step 2/4.</text>
</comment>
<comment type="similarity">
    <text evidence="1">Belongs to the ketol-acid reductoisomerase family.</text>
</comment>
<gene>
    <name evidence="1" type="primary">ilvC</name>
    <name type="ordered locus">SMU_233</name>
</gene>
<protein>
    <recommendedName>
        <fullName evidence="1">Ketol-acid reductoisomerase (NADP(+))</fullName>
        <shortName evidence="1">KARI</shortName>
        <ecNumber evidence="1">1.1.1.86</ecNumber>
    </recommendedName>
    <alternativeName>
        <fullName evidence="1">Acetohydroxy-acid isomeroreductase</fullName>
        <shortName evidence="1">AHIR</shortName>
    </alternativeName>
    <alternativeName>
        <fullName evidence="1">Alpha-keto-beta-hydroxylacyl reductoisomerase</fullName>
    </alternativeName>
    <alternativeName>
        <fullName evidence="1">Ketol-acid reductoisomerase type 1</fullName>
    </alternativeName>
    <alternativeName>
        <fullName evidence="1">Ketol-acid reductoisomerase type I</fullName>
    </alternativeName>
</protein>
<accession>Q8DW43</accession>
<keyword id="KW-0028">Amino-acid biosynthesis</keyword>
<keyword id="KW-0100">Branched-chain amino acid biosynthesis</keyword>
<keyword id="KW-0460">Magnesium</keyword>
<keyword id="KW-0479">Metal-binding</keyword>
<keyword id="KW-0521">NADP</keyword>
<keyword id="KW-0560">Oxidoreductase</keyword>
<keyword id="KW-1185">Reference proteome</keyword>
<feature type="chain" id="PRO_0000151366" description="Ketol-acid reductoisomerase (NADP(+))">
    <location>
        <begin position="1"/>
        <end position="340"/>
    </location>
</feature>
<feature type="domain" description="KARI N-terminal Rossmann" evidence="2">
    <location>
        <begin position="3"/>
        <end position="182"/>
    </location>
</feature>
<feature type="domain" description="KARI C-terminal knotted" evidence="3">
    <location>
        <begin position="183"/>
        <end position="328"/>
    </location>
</feature>
<feature type="active site" evidence="1">
    <location>
        <position position="108"/>
    </location>
</feature>
<feature type="binding site" evidence="1">
    <location>
        <begin position="26"/>
        <end position="29"/>
    </location>
    <ligand>
        <name>NADP(+)</name>
        <dbReference type="ChEBI" id="CHEBI:58349"/>
    </ligand>
</feature>
<feature type="binding site" evidence="1">
    <location>
        <position position="49"/>
    </location>
    <ligand>
        <name>NADP(+)</name>
        <dbReference type="ChEBI" id="CHEBI:58349"/>
    </ligand>
</feature>
<feature type="binding site" evidence="1">
    <location>
        <position position="53"/>
    </location>
    <ligand>
        <name>NADP(+)</name>
        <dbReference type="ChEBI" id="CHEBI:58349"/>
    </ligand>
</feature>
<feature type="binding site" evidence="1">
    <location>
        <begin position="83"/>
        <end position="86"/>
    </location>
    <ligand>
        <name>NADP(+)</name>
        <dbReference type="ChEBI" id="CHEBI:58349"/>
    </ligand>
</feature>
<feature type="binding site" evidence="1">
    <location>
        <position position="134"/>
    </location>
    <ligand>
        <name>NADP(+)</name>
        <dbReference type="ChEBI" id="CHEBI:58349"/>
    </ligand>
</feature>
<feature type="binding site" evidence="1">
    <location>
        <position position="191"/>
    </location>
    <ligand>
        <name>Mg(2+)</name>
        <dbReference type="ChEBI" id="CHEBI:18420"/>
        <label>1</label>
    </ligand>
</feature>
<feature type="binding site" evidence="1">
    <location>
        <position position="191"/>
    </location>
    <ligand>
        <name>Mg(2+)</name>
        <dbReference type="ChEBI" id="CHEBI:18420"/>
        <label>2</label>
    </ligand>
</feature>
<feature type="binding site" evidence="1">
    <location>
        <position position="195"/>
    </location>
    <ligand>
        <name>Mg(2+)</name>
        <dbReference type="ChEBI" id="CHEBI:18420"/>
        <label>1</label>
    </ligand>
</feature>
<feature type="binding site" evidence="1">
    <location>
        <position position="227"/>
    </location>
    <ligand>
        <name>Mg(2+)</name>
        <dbReference type="ChEBI" id="CHEBI:18420"/>
        <label>2</label>
    </ligand>
</feature>
<feature type="binding site" evidence="1">
    <location>
        <position position="231"/>
    </location>
    <ligand>
        <name>Mg(2+)</name>
        <dbReference type="ChEBI" id="CHEBI:18420"/>
        <label>2</label>
    </ligand>
</feature>
<feature type="binding site" evidence="1">
    <location>
        <position position="252"/>
    </location>
    <ligand>
        <name>substrate</name>
    </ligand>
</feature>
<organism>
    <name type="scientific">Streptococcus mutans serotype c (strain ATCC 700610 / UA159)</name>
    <dbReference type="NCBI Taxonomy" id="210007"/>
    <lineage>
        <taxon>Bacteria</taxon>
        <taxon>Bacillati</taxon>
        <taxon>Bacillota</taxon>
        <taxon>Bacilli</taxon>
        <taxon>Lactobacillales</taxon>
        <taxon>Streptococcaceae</taxon>
        <taxon>Streptococcus</taxon>
    </lineage>
</organism>
<sequence>MAVEMLYEADVKVAALDGKKIAVIGYGSQGHAHAQNLRDSGHDVIIGVRHGKSFDKAKEDGFDTYEVGEATKLADIIMVLAPDEIQKDIYKDEIAPNLSAGKALGFAHGFNIHFGYIKAPEDVDVFMVAPKGPGHLVRRTYTEGFGVPSLYAVYQNPTGNAENIALDWAKGIGSARVGLLVTTFKEETEEDLFGEQAVLMGGLTHLIEAGFEVLTEAGYAPQLAYFEVLHEMKLIVDLIYEGGFKKMRQSCSNTAEFGDFVTGPRVIGPEVKENMKAALADIQSGKFAREFVEDHDAGFPRLKAFRKEAEGLEIEKIGAELRKAMPFVNQNDDDAFKIYN</sequence>
<proteinExistence type="inferred from homology"/>
<evidence type="ECO:0000255" key="1">
    <source>
        <dbReference type="HAMAP-Rule" id="MF_00435"/>
    </source>
</evidence>
<evidence type="ECO:0000255" key="2">
    <source>
        <dbReference type="PROSITE-ProRule" id="PRU01197"/>
    </source>
</evidence>
<evidence type="ECO:0000255" key="3">
    <source>
        <dbReference type="PROSITE-ProRule" id="PRU01198"/>
    </source>
</evidence>